<accession>P19011</accession>
<dbReference type="EMBL" id="X01171">
    <property type="protein sequence ID" value="CAA25617.1"/>
    <property type="molecule type" value="Genomic_DNA"/>
</dbReference>
<dbReference type="PIR" id="D23876">
    <property type="entry name" value="D23876"/>
</dbReference>
<dbReference type="SMR" id="P19011"/>
<dbReference type="AGR" id="Xenbase:XB-GENE-17342380"/>
<dbReference type="Xenbase" id="XB-GENE-17342380">
    <property type="gene designation" value="vtgb1.S"/>
</dbReference>
<dbReference type="Proteomes" id="UP000186698">
    <property type="component" value="Unplaced"/>
</dbReference>
<dbReference type="GO" id="GO:0005319">
    <property type="term" value="F:lipid transporter activity"/>
    <property type="evidence" value="ECO:0007669"/>
    <property type="project" value="InterPro"/>
</dbReference>
<dbReference type="GO" id="GO:0045735">
    <property type="term" value="F:nutrient reservoir activity"/>
    <property type="evidence" value="ECO:0007669"/>
    <property type="project" value="UniProtKB-KW"/>
</dbReference>
<dbReference type="GO" id="GO:0071391">
    <property type="term" value="P:cellular response to estrogen stimulus"/>
    <property type="evidence" value="ECO:0007669"/>
    <property type="project" value="TreeGrafter"/>
</dbReference>
<dbReference type="GO" id="GO:0032355">
    <property type="term" value="P:response to estradiol"/>
    <property type="evidence" value="ECO:0007669"/>
    <property type="project" value="TreeGrafter"/>
</dbReference>
<dbReference type="Gene3D" id="2.30.230.10">
    <property type="entry name" value="Lipovitellin, beta-sheet shell regions, chain A"/>
    <property type="match status" value="1"/>
</dbReference>
<dbReference type="InterPro" id="IPR015819">
    <property type="entry name" value="Lipid_transp_b-sht_shell"/>
</dbReference>
<dbReference type="InterPro" id="IPR015816">
    <property type="entry name" value="Vitellinogen_b-sht_N"/>
</dbReference>
<dbReference type="InterPro" id="IPR050733">
    <property type="entry name" value="Vitellogenin/Apolipophorin"/>
</dbReference>
<dbReference type="InterPro" id="IPR001747">
    <property type="entry name" value="Vitellogenin_N"/>
</dbReference>
<dbReference type="PANTHER" id="PTHR23345:SF15">
    <property type="entry name" value="VITELLOGENIN 1-RELATED"/>
    <property type="match status" value="1"/>
</dbReference>
<dbReference type="PANTHER" id="PTHR23345">
    <property type="entry name" value="VITELLOGENIN-RELATED"/>
    <property type="match status" value="1"/>
</dbReference>
<dbReference type="Pfam" id="PF01347">
    <property type="entry name" value="Vitellogenin_N"/>
    <property type="match status" value="1"/>
</dbReference>
<dbReference type="SUPFAM" id="SSF56968">
    <property type="entry name" value="Lipovitellin-phosvitin complex, beta-sheet shell regions"/>
    <property type="match status" value="1"/>
</dbReference>
<comment type="function">
    <text>Precursor of the major egg-yolk proteins that are sources of nutrients during early development of oviparous organisms.</text>
</comment>
<comment type="tissue specificity">
    <text>Produced by the liver, secreted into the blood and then sequestered by receptor mediated endocytosis into growing oocytes, where it is generally cleaved, giving rise to the respective yolk components.</text>
</comment>
<comment type="induction">
    <text>By steroids (estrogen).</text>
</comment>
<name>VITB2_XENLA</name>
<evidence type="ECO:0000255" key="1">
    <source>
        <dbReference type="PROSITE-ProRule" id="PRU00557"/>
    </source>
</evidence>
<evidence type="ECO:0000269" key="2">
    <source>
    </source>
</evidence>
<organism>
    <name type="scientific">Xenopus laevis</name>
    <name type="common">African clawed frog</name>
    <dbReference type="NCBI Taxonomy" id="8355"/>
    <lineage>
        <taxon>Eukaryota</taxon>
        <taxon>Metazoa</taxon>
        <taxon>Chordata</taxon>
        <taxon>Craniata</taxon>
        <taxon>Vertebrata</taxon>
        <taxon>Euteleostomi</taxon>
        <taxon>Amphibia</taxon>
        <taxon>Batrachia</taxon>
        <taxon>Anura</taxon>
        <taxon>Pipoidea</taxon>
        <taxon>Pipidae</taxon>
        <taxon>Xenopodinae</taxon>
        <taxon>Xenopus</taxon>
        <taxon>Xenopus</taxon>
    </lineage>
</organism>
<keyword id="KW-0903">Direct protein sequencing</keyword>
<keyword id="KW-0597">Phosphoprotein</keyword>
<keyword id="KW-1185">Reference proteome</keyword>
<keyword id="KW-0732">Signal</keyword>
<keyword id="KW-0758">Storage protein</keyword>
<feature type="signal peptide" evidence="2">
    <location>
        <begin position="1"/>
        <end position="15"/>
    </location>
</feature>
<feature type="chain" id="PRO_0000041590" description="Vitellogenin-B2">
    <location>
        <begin position="16"/>
        <end position="71" status="greater than"/>
    </location>
</feature>
<feature type="domain" description="Vitellogenin" evidence="1">
    <location>
        <begin position="24"/>
        <end position="71" status="greater than"/>
    </location>
</feature>
<feature type="non-terminal residue">
    <location>
        <position position="71"/>
    </location>
</feature>
<reference key="1">
    <citation type="journal article" date="1984" name="Nucleic Acids Res.">
        <title>Evolution of vitellogenin genes: comparative analysis of the nucleotide sequences downstream of the transcription initiation site of four Xenopus laevis and one chicken gene.</title>
        <authorList>
            <person name="Germond J.-E."/>
            <person name="Walker P."/>
            <person name="ten Heggeler B."/>
            <person name="Brown-Luedi M."/>
            <person name="de Bony E."/>
            <person name="Wahli W."/>
        </authorList>
    </citation>
    <scope>NUCLEOTIDE SEQUENCE [GENOMIC DNA]</scope>
</reference>
<reference key="2">
    <citation type="journal article" date="1994" name="Biochem. Biophys. Res. Commun.">
        <title>Xenopus laevis vitellogenin is a zinc protein.</title>
        <authorList>
            <person name="Montorzi M."/>
            <person name="Falchuk K.H."/>
            <person name="Vallee B.L."/>
        </authorList>
    </citation>
    <scope>PROTEIN SEQUENCE OF 16-25</scope>
</reference>
<protein>
    <recommendedName>
        <fullName>Vitellogenin-B2</fullName>
        <shortName>VTG B2</shortName>
    </recommendedName>
</protein>
<sequence>MRGIILALLLALAGCEKSQYEPFFSESKTYVYNYEGIILNGIPENGLARSGIKLNCKVELSGYAQRSYMLK</sequence>
<proteinExistence type="evidence at protein level"/>